<feature type="chain" id="PRO_1000196516" description="Small ribosomal subunit protein bS18">
    <location>
        <begin position="1"/>
        <end position="77"/>
    </location>
</feature>
<accession>C1ER65</accession>
<name>RS18_BACC3</name>
<comment type="function">
    <text evidence="1">Binds as a heterodimer with protein bS6 to the central domain of the 16S rRNA, where it helps stabilize the platform of the 30S subunit.</text>
</comment>
<comment type="subunit">
    <text evidence="1">Part of the 30S ribosomal subunit. Forms a tight heterodimer with protein bS6.</text>
</comment>
<comment type="similarity">
    <text evidence="1">Belongs to the bacterial ribosomal protein bS18 family.</text>
</comment>
<protein>
    <recommendedName>
        <fullName evidence="1">Small ribosomal subunit protein bS18</fullName>
    </recommendedName>
    <alternativeName>
        <fullName evidence="2">30S ribosomal protein S18</fullName>
    </alternativeName>
</protein>
<evidence type="ECO:0000255" key="1">
    <source>
        <dbReference type="HAMAP-Rule" id="MF_00270"/>
    </source>
</evidence>
<evidence type="ECO:0000305" key="2"/>
<keyword id="KW-0687">Ribonucleoprotein</keyword>
<keyword id="KW-0689">Ribosomal protein</keyword>
<keyword id="KW-0694">RNA-binding</keyword>
<keyword id="KW-0699">rRNA-binding</keyword>
<sequence length="77" mass="8829">MAGRKGGRAKRRKVCFFTSNGITRIDYKDVDLLKRFVSERGKILPRRVTGTSAKYQRKLTVAIKRARQMALLPYVGE</sequence>
<dbReference type="EMBL" id="CP001407">
    <property type="protein sequence ID" value="ACO27768.1"/>
    <property type="molecule type" value="Genomic_DNA"/>
</dbReference>
<dbReference type="RefSeq" id="WP_000918874.1">
    <property type="nucleotide sequence ID" value="NZ_CP009318.1"/>
</dbReference>
<dbReference type="SMR" id="C1ER65"/>
<dbReference type="GeneID" id="92885945"/>
<dbReference type="KEGG" id="bcx:BCA_5627"/>
<dbReference type="PATRIC" id="fig|572264.18.peg.49"/>
<dbReference type="Proteomes" id="UP000002210">
    <property type="component" value="Chromosome"/>
</dbReference>
<dbReference type="GO" id="GO:0022627">
    <property type="term" value="C:cytosolic small ribosomal subunit"/>
    <property type="evidence" value="ECO:0007669"/>
    <property type="project" value="TreeGrafter"/>
</dbReference>
<dbReference type="GO" id="GO:0070181">
    <property type="term" value="F:small ribosomal subunit rRNA binding"/>
    <property type="evidence" value="ECO:0007669"/>
    <property type="project" value="TreeGrafter"/>
</dbReference>
<dbReference type="GO" id="GO:0003735">
    <property type="term" value="F:structural constituent of ribosome"/>
    <property type="evidence" value="ECO:0007669"/>
    <property type="project" value="InterPro"/>
</dbReference>
<dbReference type="GO" id="GO:0006412">
    <property type="term" value="P:translation"/>
    <property type="evidence" value="ECO:0007669"/>
    <property type="project" value="UniProtKB-UniRule"/>
</dbReference>
<dbReference type="FunFam" id="4.10.640.10:FF:000003">
    <property type="entry name" value="30S ribosomal protein S18"/>
    <property type="match status" value="1"/>
</dbReference>
<dbReference type="Gene3D" id="4.10.640.10">
    <property type="entry name" value="Ribosomal protein S18"/>
    <property type="match status" value="1"/>
</dbReference>
<dbReference type="HAMAP" id="MF_00270">
    <property type="entry name" value="Ribosomal_bS18"/>
    <property type="match status" value="1"/>
</dbReference>
<dbReference type="InterPro" id="IPR001648">
    <property type="entry name" value="Ribosomal_bS18"/>
</dbReference>
<dbReference type="InterPro" id="IPR018275">
    <property type="entry name" value="Ribosomal_bS18_CS"/>
</dbReference>
<dbReference type="InterPro" id="IPR036870">
    <property type="entry name" value="Ribosomal_bS18_sf"/>
</dbReference>
<dbReference type="NCBIfam" id="TIGR00165">
    <property type="entry name" value="S18"/>
    <property type="match status" value="1"/>
</dbReference>
<dbReference type="PANTHER" id="PTHR13479">
    <property type="entry name" value="30S RIBOSOMAL PROTEIN S18"/>
    <property type="match status" value="1"/>
</dbReference>
<dbReference type="PANTHER" id="PTHR13479:SF40">
    <property type="entry name" value="SMALL RIBOSOMAL SUBUNIT PROTEIN BS18M"/>
    <property type="match status" value="1"/>
</dbReference>
<dbReference type="Pfam" id="PF01084">
    <property type="entry name" value="Ribosomal_S18"/>
    <property type="match status" value="1"/>
</dbReference>
<dbReference type="PRINTS" id="PR00974">
    <property type="entry name" value="RIBOSOMALS18"/>
</dbReference>
<dbReference type="SUPFAM" id="SSF46911">
    <property type="entry name" value="Ribosomal protein S18"/>
    <property type="match status" value="1"/>
</dbReference>
<dbReference type="PROSITE" id="PS00057">
    <property type="entry name" value="RIBOSOMAL_S18"/>
    <property type="match status" value="1"/>
</dbReference>
<gene>
    <name evidence="1" type="primary">rpsR</name>
    <name type="ordered locus">BCA_5627</name>
</gene>
<proteinExistence type="inferred from homology"/>
<organism>
    <name type="scientific">Bacillus cereus (strain 03BB102)</name>
    <dbReference type="NCBI Taxonomy" id="572264"/>
    <lineage>
        <taxon>Bacteria</taxon>
        <taxon>Bacillati</taxon>
        <taxon>Bacillota</taxon>
        <taxon>Bacilli</taxon>
        <taxon>Bacillales</taxon>
        <taxon>Bacillaceae</taxon>
        <taxon>Bacillus</taxon>
        <taxon>Bacillus cereus group</taxon>
    </lineage>
</organism>
<reference key="1">
    <citation type="submission" date="2009-02" db="EMBL/GenBank/DDBJ databases">
        <title>Genome sequence of Bacillus cereus 03BB102.</title>
        <authorList>
            <person name="Dodson R.J."/>
            <person name="Jackson P."/>
            <person name="Munk A.C."/>
            <person name="Brettin T."/>
            <person name="Bruce D."/>
            <person name="Detter C."/>
            <person name="Tapia R."/>
            <person name="Han C."/>
            <person name="Sutton G."/>
            <person name="Sims D."/>
        </authorList>
    </citation>
    <scope>NUCLEOTIDE SEQUENCE [LARGE SCALE GENOMIC DNA]</scope>
    <source>
        <strain>03BB102</strain>
    </source>
</reference>